<keyword id="KW-0175">Coiled coil</keyword>
<keyword id="KW-0217">Developmental protein</keyword>
<keyword id="KW-0238">DNA-binding</keyword>
<keyword id="KW-0371">Homeobox</keyword>
<keyword id="KW-0539">Nucleus</keyword>
<keyword id="KW-1185">Reference proteome</keyword>
<keyword id="KW-0804">Transcription</keyword>
<keyword id="KW-0805">Transcription regulation</keyword>
<gene>
    <name type="primary">hbx4</name>
    <name type="ORF">DDB_G0272967</name>
</gene>
<protein>
    <recommendedName>
        <fullName>Homeobox protein 4</fullName>
        <shortName>DdHbx-4</shortName>
    </recommendedName>
</protein>
<organism>
    <name type="scientific">Dictyostelium discoideum</name>
    <name type="common">Social amoeba</name>
    <dbReference type="NCBI Taxonomy" id="44689"/>
    <lineage>
        <taxon>Eukaryota</taxon>
        <taxon>Amoebozoa</taxon>
        <taxon>Evosea</taxon>
        <taxon>Eumycetozoa</taxon>
        <taxon>Dictyostelia</taxon>
        <taxon>Dictyosteliales</taxon>
        <taxon>Dictyosteliaceae</taxon>
        <taxon>Dictyostelium</taxon>
    </lineage>
</organism>
<comment type="function">
    <text evidence="1">Putative transcription factor.</text>
</comment>
<comment type="subcellular location">
    <subcellularLocation>
        <location evidence="3">Nucleus</location>
    </subcellularLocation>
</comment>
<reference key="1">
    <citation type="journal article" date="2002" name="Nature">
        <title>Sequence and analysis of chromosome 2 of Dictyostelium discoideum.</title>
        <authorList>
            <person name="Gloeckner G."/>
            <person name="Eichinger L."/>
            <person name="Szafranski K."/>
            <person name="Pachebat J.A."/>
            <person name="Bankier A.T."/>
            <person name="Dear P.H."/>
            <person name="Lehmann R."/>
            <person name="Baumgart C."/>
            <person name="Parra G."/>
            <person name="Abril J.F."/>
            <person name="Guigo R."/>
            <person name="Kumpf K."/>
            <person name="Tunggal B."/>
            <person name="Cox E.C."/>
            <person name="Quail M.A."/>
            <person name="Platzer M."/>
            <person name="Rosenthal A."/>
            <person name="Noegel A.A."/>
        </authorList>
    </citation>
    <scope>NUCLEOTIDE SEQUENCE [LARGE SCALE GENOMIC DNA]</scope>
    <source>
        <strain>AX4</strain>
    </source>
</reference>
<reference key="2">
    <citation type="journal article" date="2005" name="Nature">
        <title>The genome of the social amoeba Dictyostelium discoideum.</title>
        <authorList>
            <person name="Eichinger L."/>
            <person name="Pachebat J.A."/>
            <person name="Gloeckner G."/>
            <person name="Rajandream M.A."/>
            <person name="Sucgang R."/>
            <person name="Berriman M."/>
            <person name="Song J."/>
            <person name="Olsen R."/>
            <person name="Szafranski K."/>
            <person name="Xu Q."/>
            <person name="Tunggal B."/>
            <person name="Kummerfeld S."/>
            <person name="Madera M."/>
            <person name="Konfortov B.A."/>
            <person name="Rivero F."/>
            <person name="Bankier A.T."/>
            <person name="Lehmann R."/>
            <person name="Hamlin N."/>
            <person name="Davies R."/>
            <person name="Gaudet P."/>
            <person name="Fey P."/>
            <person name="Pilcher K."/>
            <person name="Chen G."/>
            <person name="Saunders D."/>
            <person name="Sodergren E.J."/>
            <person name="Davis P."/>
            <person name="Kerhornou A."/>
            <person name="Nie X."/>
            <person name="Hall N."/>
            <person name="Anjard C."/>
            <person name="Hemphill L."/>
            <person name="Bason N."/>
            <person name="Farbrother P."/>
            <person name="Desany B."/>
            <person name="Just E."/>
            <person name="Morio T."/>
            <person name="Rost R."/>
            <person name="Churcher C.M."/>
            <person name="Cooper J."/>
            <person name="Haydock S."/>
            <person name="van Driessche N."/>
            <person name="Cronin A."/>
            <person name="Goodhead I."/>
            <person name="Muzny D.M."/>
            <person name="Mourier T."/>
            <person name="Pain A."/>
            <person name="Lu M."/>
            <person name="Harper D."/>
            <person name="Lindsay R."/>
            <person name="Hauser H."/>
            <person name="James K.D."/>
            <person name="Quiles M."/>
            <person name="Madan Babu M."/>
            <person name="Saito T."/>
            <person name="Buchrieser C."/>
            <person name="Wardroper A."/>
            <person name="Felder M."/>
            <person name="Thangavelu M."/>
            <person name="Johnson D."/>
            <person name="Knights A."/>
            <person name="Loulseged H."/>
            <person name="Mungall K.L."/>
            <person name="Oliver K."/>
            <person name="Price C."/>
            <person name="Quail M.A."/>
            <person name="Urushihara H."/>
            <person name="Hernandez J."/>
            <person name="Rabbinowitsch E."/>
            <person name="Steffen D."/>
            <person name="Sanders M."/>
            <person name="Ma J."/>
            <person name="Kohara Y."/>
            <person name="Sharp S."/>
            <person name="Simmonds M.N."/>
            <person name="Spiegler S."/>
            <person name="Tivey A."/>
            <person name="Sugano S."/>
            <person name="White B."/>
            <person name="Walker D."/>
            <person name="Woodward J.R."/>
            <person name="Winckler T."/>
            <person name="Tanaka Y."/>
            <person name="Shaulsky G."/>
            <person name="Schleicher M."/>
            <person name="Weinstock G.M."/>
            <person name="Rosenthal A."/>
            <person name="Cox E.C."/>
            <person name="Chisholm R.L."/>
            <person name="Gibbs R.A."/>
            <person name="Loomis W.F."/>
            <person name="Platzer M."/>
            <person name="Kay R.R."/>
            <person name="Williams J.G."/>
            <person name="Dear P.H."/>
            <person name="Noegel A.A."/>
            <person name="Barrell B.G."/>
            <person name="Kuspa A."/>
        </authorList>
    </citation>
    <scope>NUCLEOTIDE SEQUENCE [LARGE SCALE GENOMIC DNA]</scope>
    <source>
        <strain>AX4</strain>
    </source>
</reference>
<feature type="chain" id="PRO_0000388788" description="Homeobox protein 4">
    <location>
        <begin position="1"/>
        <end position="740"/>
    </location>
</feature>
<feature type="DNA-binding region" description="Homeobox" evidence="3">
    <location>
        <begin position="605"/>
        <end position="667"/>
    </location>
</feature>
<feature type="region of interest" description="Disordered" evidence="4">
    <location>
        <begin position="1"/>
        <end position="41"/>
    </location>
</feature>
<feature type="region of interest" description="Disordered" evidence="4">
    <location>
        <begin position="179"/>
        <end position="491"/>
    </location>
</feature>
<feature type="region of interest" description="Disordered" evidence="4">
    <location>
        <begin position="686"/>
        <end position="740"/>
    </location>
</feature>
<feature type="coiled-coil region" evidence="2">
    <location>
        <begin position="254"/>
        <end position="287"/>
    </location>
</feature>
<feature type="coiled-coil region" evidence="2">
    <location>
        <begin position="472"/>
        <end position="500"/>
    </location>
</feature>
<feature type="compositionally biased region" description="Polar residues" evidence="4">
    <location>
        <begin position="1"/>
        <end position="13"/>
    </location>
</feature>
<feature type="compositionally biased region" description="Low complexity" evidence="4">
    <location>
        <begin position="14"/>
        <end position="34"/>
    </location>
</feature>
<feature type="compositionally biased region" description="Low complexity" evidence="4">
    <location>
        <begin position="179"/>
        <end position="241"/>
    </location>
</feature>
<feature type="compositionally biased region" description="Low complexity" evidence="4">
    <location>
        <begin position="251"/>
        <end position="288"/>
    </location>
</feature>
<feature type="compositionally biased region" description="Low complexity" evidence="4">
    <location>
        <begin position="303"/>
        <end position="316"/>
    </location>
</feature>
<feature type="compositionally biased region" description="Basic residues" evidence="4">
    <location>
        <begin position="317"/>
        <end position="328"/>
    </location>
</feature>
<feature type="compositionally biased region" description="Polar residues" evidence="4">
    <location>
        <begin position="339"/>
        <end position="363"/>
    </location>
</feature>
<feature type="compositionally biased region" description="Low complexity" evidence="4">
    <location>
        <begin position="365"/>
        <end position="390"/>
    </location>
</feature>
<feature type="compositionally biased region" description="Low complexity" evidence="4">
    <location>
        <begin position="397"/>
        <end position="491"/>
    </location>
</feature>
<feature type="compositionally biased region" description="Low complexity" evidence="4">
    <location>
        <begin position="686"/>
        <end position="722"/>
    </location>
</feature>
<feature type="compositionally biased region" description="Acidic residues" evidence="4">
    <location>
        <begin position="726"/>
        <end position="740"/>
    </location>
</feature>
<evidence type="ECO:0000250" key="1"/>
<evidence type="ECO:0000255" key="2"/>
<evidence type="ECO:0000255" key="3">
    <source>
        <dbReference type="PROSITE-ProRule" id="PRU00108"/>
    </source>
</evidence>
<evidence type="ECO:0000256" key="4">
    <source>
        <dbReference type="SAM" id="MobiDB-lite"/>
    </source>
</evidence>
<proteinExistence type="inferred from homology"/>
<name>HBX4_DICDI</name>
<dbReference type="EMBL" id="AAFI02000008">
    <property type="protein sequence ID" value="EAL71121.1"/>
    <property type="molecule type" value="Genomic_DNA"/>
</dbReference>
<dbReference type="RefSeq" id="XP_644890.1">
    <property type="nucleotide sequence ID" value="XM_639798.1"/>
</dbReference>
<dbReference type="SMR" id="Q86IH1"/>
<dbReference type="STRING" id="44689.Q86IH1"/>
<dbReference type="GlyGen" id="Q86IH1">
    <property type="glycosylation" value="1 site"/>
</dbReference>
<dbReference type="PaxDb" id="44689-DDB0220484"/>
<dbReference type="EnsemblProtists" id="EAL71121">
    <property type="protein sequence ID" value="EAL71121"/>
    <property type="gene ID" value="DDB_G0272967"/>
</dbReference>
<dbReference type="GeneID" id="8618569"/>
<dbReference type="KEGG" id="ddi:DDB_G0272967"/>
<dbReference type="dictyBase" id="DDB_G0272967">
    <property type="gene designation" value="hbx4"/>
</dbReference>
<dbReference type="VEuPathDB" id="AmoebaDB:DDB_G0272967"/>
<dbReference type="eggNOG" id="KOG0773">
    <property type="taxonomic scope" value="Eukaryota"/>
</dbReference>
<dbReference type="HOGENOM" id="CLU_375280_0_0_1"/>
<dbReference type="InParanoid" id="Q86IH1"/>
<dbReference type="PRO" id="PR:Q86IH1"/>
<dbReference type="Proteomes" id="UP000002195">
    <property type="component" value="Chromosome 2"/>
</dbReference>
<dbReference type="GO" id="GO:0005634">
    <property type="term" value="C:nucleus"/>
    <property type="evidence" value="ECO:0000318"/>
    <property type="project" value="GO_Central"/>
</dbReference>
<dbReference type="GO" id="GO:0005667">
    <property type="term" value="C:transcription regulator complex"/>
    <property type="evidence" value="ECO:0000318"/>
    <property type="project" value="GO_Central"/>
</dbReference>
<dbReference type="GO" id="GO:0000981">
    <property type="term" value="F:DNA-binding transcription factor activity, RNA polymerase II-specific"/>
    <property type="evidence" value="ECO:0000318"/>
    <property type="project" value="GO_Central"/>
</dbReference>
<dbReference type="GO" id="GO:0000978">
    <property type="term" value="F:RNA polymerase II cis-regulatory region sequence-specific DNA binding"/>
    <property type="evidence" value="ECO:0000318"/>
    <property type="project" value="GO_Central"/>
</dbReference>
<dbReference type="GO" id="GO:0000976">
    <property type="term" value="F:transcription cis-regulatory region binding"/>
    <property type="evidence" value="ECO:0000314"/>
    <property type="project" value="dictyBase"/>
</dbReference>
<dbReference type="GO" id="GO:0000281">
    <property type="term" value="P:mitotic cytokinesis"/>
    <property type="evidence" value="ECO:0000315"/>
    <property type="project" value="dictyBase"/>
</dbReference>
<dbReference type="GO" id="GO:0010629">
    <property type="term" value="P:negative regulation of gene expression"/>
    <property type="evidence" value="ECO:0000315"/>
    <property type="project" value="dictyBase"/>
</dbReference>
<dbReference type="GO" id="GO:1901262">
    <property type="term" value="P:negative regulation of sorocarp spore cell differentiation"/>
    <property type="evidence" value="ECO:0000315"/>
    <property type="project" value="dictyBase"/>
</dbReference>
<dbReference type="GO" id="GO:0006357">
    <property type="term" value="P:regulation of transcription by RNA polymerase II"/>
    <property type="evidence" value="ECO:0000318"/>
    <property type="project" value="GO_Central"/>
</dbReference>
<dbReference type="GO" id="GO:0031153">
    <property type="term" value="P:slug development involved in sorocarp development"/>
    <property type="evidence" value="ECO:0000315"/>
    <property type="project" value="dictyBase"/>
</dbReference>
<dbReference type="CDD" id="cd00086">
    <property type="entry name" value="homeodomain"/>
    <property type="match status" value="1"/>
</dbReference>
<dbReference type="Gene3D" id="1.10.10.60">
    <property type="entry name" value="Homeodomain-like"/>
    <property type="match status" value="1"/>
</dbReference>
<dbReference type="InterPro" id="IPR001356">
    <property type="entry name" value="HD"/>
</dbReference>
<dbReference type="InterPro" id="IPR009057">
    <property type="entry name" value="Homeodomain-like_sf"/>
</dbReference>
<dbReference type="PANTHER" id="PTHR10390">
    <property type="entry name" value="HOMEOBOX PROTEIN SIX"/>
    <property type="match status" value="1"/>
</dbReference>
<dbReference type="PANTHER" id="PTHR10390:SF44">
    <property type="entry name" value="SIX HOMEOBOX 4"/>
    <property type="match status" value="1"/>
</dbReference>
<dbReference type="Pfam" id="PF00046">
    <property type="entry name" value="Homeodomain"/>
    <property type="match status" value="1"/>
</dbReference>
<dbReference type="SMART" id="SM00389">
    <property type="entry name" value="HOX"/>
    <property type="match status" value="1"/>
</dbReference>
<dbReference type="SUPFAM" id="SSF46689">
    <property type="entry name" value="Homeodomain-like"/>
    <property type="match status" value="1"/>
</dbReference>
<dbReference type="PROSITE" id="PS50071">
    <property type="entry name" value="HOMEOBOX_2"/>
    <property type="match status" value="1"/>
</dbReference>
<accession>Q86IH1</accession>
<accession>Q559C6</accession>
<sequence length="740" mass="84487">MNTVEENNTKITDNNNNNNNNNNNNNNNNNNNKNNDGENLSQQLIDSNNKKLRSPIQVYFDSDVSSCSLQSQSSPQQLPTQQPIQQQINNIFNHFLPQNQAPLLQAQNQQPINNINQVSNFQIQPIPLTFQLPNNINTNTNNTNMINNVQQFQNNFLNNNDFSLTDPVPSPFVLFNNNNNNNNNNNNNNNNNINNFHHNNINNNFDNNNSNYNTINTHPNNTNNNSSNINQIQSNIYPQQNLHNPFLPIHNNNNINNNNINKNNNNYNNNNNNKNNNNNNNNNNNNNNPQLFSMEPPNGFNHSTTDNTSSVSSVPSNKKKSSKTKQKSKPLTIQQQQQHKSNYHQQPNQNSQHLQSKPNSPILISSPLNSQQNSSPPQPSPTQSFLSPPQYSQSPQNNNFNNNNNNISNNNNNNNNNNNNNNNNNNNNNNNNNNNNNNNNNNNNNNNNNNNNNINNSTNNNNNNSNTNNNTNTNTNNNNNKNNNNNNNNEIENNNNEELILLWYNSIIKNIIVDENHFKIENQFNKENGYLVFKQLFKNHFGSIGTIGKEMAEYIQLHCEVMNEITELSKFHFQSIDNFYNNYIRIINGYSLIPAKDSGATIKARPKKGAKLSKESKDILENWIKNHIAHPYPTNDEKEQLQRQTGLTPNQISNWFINTRRRKVPTLCDEAGIITNSNVMPQMTINNNNNNGGNSNFKNNNNNTITTTSTSNNNNNNNNNNHNEMECDDGENEESSEYDD</sequence>